<sequence>MFKIYAVSDSIGETAEQVANATAYQFGSSVKVERVPYVKTFEDVNNLISIIKNPNEAMIISTIVLVDIREFLVQRCVESGIHISNVLGPCISLVSTILNKTPEYKPGAVWDMDKKYYKKIEAMEFAIRYDDSKDHSGIKHADIVLIGLSRTSKTPLSIYLANKGIKALNIPLMPEVPVPEELFEIDRKKIIGLTIDPMHLIEIRRHRVDNMMKIPTELKYANAERVLDELEFADKIMRKLKCKVIDVTKRAIEDTALIIMESVFSDRII</sequence>
<keyword id="KW-0418">Kinase</keyword>
<keyword id="KW-0547">Nucleotide-binding</keyword>
<keyword id="KW-0723">Serine/threonine-protein kinase</keyword>
<keyword id="KW-0808">Transferase</keyword>
<gene>
    <name type="ordered locus">CLI_3856</name>
</gene>
<reference key="1">
    <citation type="submission" date="2007-06" db="EMBL/GenBank/DDBJ databases">
        <authorList>
            <person name="Brinkac L.M."/>
            <person name="Daugherty S."/>
            <person name="Dodson R.J."/>
            <person name="Madupu R."/>
            <person name="Brown J.L."/>
            <person name="Bruce D."/>
            <person name="Detter C."/>
            <person name="Munk C."/>
            <person name="Smith L.A."/>
            <person name="Smith T.J."/>
            <person name="White O."/>
            <person name="Brettin T.S."/>
        </authorList>
    </citation>
    <scope>NUCLEOTIDE SEQUENCE [LARGE SCALE GENOMIC DNA]</scope>
    <source>
        <strain>Langeland / NCTC 10281 / Type F</strain>
    </source>
</reference>
<accession>A7GJK7</accession>
<protein>
    <recommendedName>
        <fullName evidence="1">Putative pyruvate, phosphate dikinase regulatory protein</fullName>
        <shortName evidence="1">PPDK regulatory protein</shortName>
        <ecNumber evidence="1">2.7.11.32</ecNumber>
        <ecNumber evidence="1">2.7.4.27</ecNumber>
    </recommendedName>
</protein>
<name>PDRP_CLOBL</name>
<organism>
    <name type="scientific">Clostridium botulinum (strain Langeland / NCTC 10281 / Type F)</name>
    <dbReference type="NCBI Taxonomy" id="441772"/>
    <lineage>
        <taxon>Bacteria</taxon>
        <taxon>Bacillati</taxon>
        <taxon>Bacillota</taxon>
        <taxon>Clostridia</taxon>
        <taxon>Eubacteriales</taxon>
        <taxon>Clostridiaceae</taxon>
        <taxon>Clostridium</taxon>
    </lineage>
</organism>
<comment type="function">
    <text evidence="1">Bifunctional serine/threonine kinase and phosphorylase involved in the regulation of the pyruvate, phosphate dikinase (PPDK) by catalyzing its phosphorylation/dephosphorylation.</text>
</comment>
<comment type="catalytic activity">
    <reaction evidence="1">
        <text>N(tele)-phospho-L-histidyl/L-threonyl-[pyruvate, phosphate dikinase] + ADP = N(tele)-phospho-L-histidyl/O-phospho-L-threonyl-[pyruvate, phosphate dikinase] + AMP + H(+)</text>
        <dbReference type="Rhea" id="RHEA:43692"/>
        <dbReference type="Rhea" id="RHEA-COMP:10650"/>
        <dbReference type="Rhea" id="RHEA-COMP:10651"/>
        <dbReference type="ChEBI" id="CHEBI:15378"/>
        <dbReference type="ChEBI" id="CHEBI:30013"/>
        <dbReference type="ChEBI" id="CHEBI:61977"/>
        <dbReference type="ChEBI" id="CHEBI:83586"/>
        <dbReference type="ChEBI" id="CHEBI:456215"/>
        <dbReference type="ChEBI" id="CHEBI:456216"/>
        <dbReference type="EC" id="2.7.11.32"/>
    </reaction>
</comment>
<comment type="catalytic activity">
    <reaction evidence="1">
        <text>N(tele)-phospho-L-histidyl/O-phospho-L-threonyl-[pyruvate, phosphate dikinase] + phosphate + H(+) = N(tele)-phospho-L-histidyl/L-threonyl-[pyruvate, phosphate dikinase] + diphosphate</text>
        <dbReference type="Rhea" id="RHEA:43696"/>
        <dbReference type="Rhea" id="RHEA-COMP:10650"/>
        <dbReference type="Rhea" id="RHEA-COMP:10651"/>
        <dbReference type="ChEBI" id="CHEBI:15378"/>
        <dbReference type="ChEBI" id="CHEBI:30013"/>
        <dbReference type="ChEBI" id="CHEBI:33019"/>
        <dbReference type="ChEBI" id="CHEBI:43474"/>
        <dbReference type="ChEBI" id="CHEBI:61977"/>
        <dbReference type="ChEBI" id="CHEBI:83586"/>
        <dbReference type="EC" id="2.7.4.27"/>
    </reaction>
</comment>
<comment type="similarity">
    <text evidence="1">Belongs to the pyruvate, phosphate/water dikinase regulatory protein family. PDRP subfamily.</text>
</comment>
<proteinExistence type="inferred from homology"/>
<feature type="chain" id="PRO_0000316662" description="Putative pyruvate, phosphate dikinase regulatory protein">
    <location>
        <begin position="1"/>
        <end position="269"/>
    </location>
</feature>
<feature type="binding site" evidence="1">
    <location>
        <begin position="147"/>
        <end position="154"/>
    </location>
    <ligand>
        <name>ADP</name>
        <dbReference type="ChEBI" id="CHEBI:456216"/>
    </ligand>
</feature>
<dbReference type="EC" id="2.7.11.32" evidence="1"/>
<dbReference type="EC" id="2.7.4.27" evidence="1"/>
<dbReference type="EMBL" id="CP000728">
    <property type="protein sequence ID" value="ABS39758.1"/>
    <property type="molecule type" value="Genomic_DNA"/>
</dbReference>
<dbReference type="RefSeq" id="WP_003359375.1">
    <property type="nucleotide sequence ID" value="NC_009699.1"/>
</dbReference>
<dbReference type="SMR" id="A7GJK7"/>
<dbReference type="KEGG" id="cbf:CLI_3856"/>
<dbReference type="HOGENOM" id="CLU_046206_2_1_9"/>
<dbReference type="Proteomes" id="UP000002410">
    <property type="component" value="Chromosome"/>
</dbReference>
<dbReference type="GO" id="GO:0043531">
    <property type="term" value="F:ADP binding"/>
    <property type="evidence" value="ECO:0007669"/>
    <property type="project" value="UniProtKB-UniRule"/>
</dbReference>
<dbReference type="GO" id="GO:0005524">
    <property type="term" value="F:ATP binding"/>
    <property type="evidence" value="ECO:0007669"/>
    <property type="project" value="InterPro"/>
</dbReference>
<dbReference type="GO" id="GO:0016776">
    <property type="term" value="F:phosphotransferase activity, phosphate group as acceptor"/>
    <property type="evidence" value="ECO:0007669"/>
    <property type="project" value="UniProtKB-UniRule"/>
</dbReference>
<dbReference type="GO" id="GO:0004674">
    <property type="term" value="F:protein serine/threonine kinase activity"/>
    <property type="evidence" value="ECO:0007669"/>
    <property type="project" value="UniProtKB-UniRule"/>
</dbReference>
<dbReference type="HAMAP" id="MF_00921">
    <property type="entry name" value="PDRP"/>
    <property type="match status" value="1"/>
</dbReference>
<dbReference type="InterPro" id="IPR005177">
    <property type="entry name" value="Kinase-pyrophosphorylase"/>
</dbReference>
<dbReference type="InterPro" id="IPR026565">
    <property type="entry name" value="PPDK_reg"/>
</dbReference>
<dbReference type="NCBIfam" id="NF003742">
    <property type="entry name" value="PRK05339.1"/>
    <property type="match status" value="1"/>
</dbReference>
<dbReference type="PANTHER" id="PTHR31756">
    <property type="entry name" value="PYRUVATE, PHOSPHATE DIKINASE REGULATORY PROTEIN 1, CHLOROPLASTIC"/>
    <property type="match status" value="1"/>
</dbReference>
<dbReference type="PANTHER" id="PTHR31756:SF3">
    <property type="entry name" value="PYRUVATE, PHOSPHATE DIKINASE REGULATORY PROTEIN 1, CHLOROPLASTIC"/>
    <property type="match status" value="1"/>
</dbReference>
<dbReference type="Pfam" id="PF03618">
    <property type="entry name" value="Kinase-PPPase"/>
    <property type="match status" value="1"/>
</dbReference>
<evidence type="ECO:0000255" key="1">
    <source>
        <dbReference type="HAMAP-Rule" id="MF_00921"/>
    </source>
</evidence>